<reference key="1">
    <citation type="journal article" date="2010" name="J. Bacteriol.">
        <title>Complete genome sequence of Beijerinckia indica subsp. indica.</title>
        <authorList>
            <person name="Tamas I."/>
            <person name="Dedysh S.N."/>
            <person name="Liesack W."/>
            <person name="Stott M.B."/>
            <person name="Alam M."/>
            <person name="Murrell J.C."/>
            <person name="Dunfield P.F."/>
        </authorList>
    </citation>
    <scope>NUCLEOTIDE SEQUENCE [LARGE SCALE GENOMIC DNA]</scope>
    <source>
        <strain>ATCC 9039 / DSM 1715 / NCIMB 8712</strain>
    </source>
</reference>
<protein>
    <recommendedName>
        <fullName evidence="1">Large ribosomal subunit protein uL14</fullName>
    </recommendedName>
    <alternativeName>
        <fullName evidence="2">50S ribosomal protein L14</fullName>
    </alternativeName>
</protein>
<organism>
    <name type="scientific">Beijerinckia indica subsp. indica (strain ATCC 9039 / DSM 1715 / NCIMB 8712)</name>
    <dbReference type="NCBI Taxonomy" id="395963"/>
    <lineage>
        <taxon>Bacteria</taxon>
        <taxon>Pseudomonadati</taxon>
        <taxon>Pseudomonadota</taxon>
        <taxon>Alphaproteobacteria</taxon>
        <taxon>Hyphomicrobiales</taxon>
        <taxon>Beijerinckiaceae</taxon>
        <taxon>Beijerinckia</taxon>
    </lineage>
</organism>
<evidence type="ECO:0000255" key="1">
    <source>
        <dbReference type="HAMAP-Rule" id="MF_01367"/>
    </source>
</evidence>
<evidence type="ECO:0000305" key="2"/>
<proteinExistence type="inferred from homology"/>
<sequence>MIQMQTNLDVADNSGARRVMCIKVLGGSKRKYAGVGDIIVVSVKEAIPRGRVKKGDVMKAVVVRTAKDIKRADGSVIRFDTNAAVLINNQSEPVGTRIFGPVPRELRAKNHMKIISLAPEVL</sequence>
<feature type="chain" id="PRO_1000144225" description="Large ribosomal subunit protein uL14">
    <location>
        <begin position="1"/>
        <end position="122"/>
    </location>
</feature>
<comment type="function">
    <text evidence="1">Binds to 23S rRNA. Forms part of two intersubunit bridges in the 70S ribosome.</text>
</comment>
<comment type="subunit">
    <text evidence="1">Part of the 50S ribosomal subunit. Forms a cluster with proteins L3 and L19. In the 70S ribosome, L14 and L19 interact and together make contacts with the 16S rRNA in bridges B5 and B8.</text>
</comment>
<comment type="similarity">
    <text evidence="1">Belongs to the universal ribosomal protein uL14 family.</text>
</comment>
<dbReference type="EMBL" id="CP001016">
    <property type="protein sequence ID" value="ACB95004.1"/>
    <property type="molecule type" value="Genomic_DNA"/>
</dbReference>
<dbReference type="RefSeq" id="WP_012384361.1">
    <property type="nucleotide sequence ID" value="NC_010581.1"/>
</dbReference>
<dbReference type="SMR" id="B2IK72"/>
<dbReference type="STRING" id="395963.Bind_1364"/>
<dbReference type="KEGG" id="bid:Bind_1364"/>
<dbReference type="eggNOG" id="COG0093">
    <property type="taxonomic scope" value="Bacteria"/>
</dbReference>
<dbReference type="HOGENOM" id="CLU_095071_2_1_5"/>
<dbReference type="OrthoDB" id="9806379at2"/>
<dbReference type="Proteomes" id="UP000001695">
    <property type="component" value="Chromosome"/>
</dbReference>
<dbReference type="GO" id="GO:0022625">
    <property type="term" value="C:cytosolic large ribosomal subunit"/>
    <property type="evidence" value="ECO:0007669"/>
    <property type="project" value="TreeGrafter"/>
</dbReference>
<dbReference type="GO" id="GO:0070180">
    <property type="term" value="F:large ribosomal subunit rRNA binding"/>
    <property type="evidence" value="ECO:0007669"/>
    <property type="project" value="TreeGrafter"/>
</dbReference>
<dbReference type="GO" id="GO:0003735">
    <property type="term" value="F:structural constituent of ribosome"/>
    <property type="evidence" value="ECO:0007669"/>
    <property type="project" value="InterPro"/>
</dbReference>
<dbReference type="GO" id="GO:0006412">
    <property type="term" value="P:translation"/>
    <property type="evidence" value="ECO:0007669"/>
    <property type="project" value="UniProtKB-UniRule"/>
</dbReference>
<dbReference type="CDD" id="cd00337">
    <property type="entry name" value="Ribosomal_uL14"/>
    <property type="match status" value="1"/>
</dbReference>
<dbReference type="FunFam" id="2.40.150.20:FF:000001">
    <property type="entry name" value="50S ribosomal protein L14"/>
    <property type="match status" value="1"/>
</dbReference>
<dbReference type="Gene3D" id="2.40.150.20">
    <property type="entry name" value="Ribosomal protein L14"/>
    <property type="match status" value="1"/>
</dbReference>
<dbReference type="HAMAP" id="MF_01367">
    <property type="entry name" value="Ribosomal_uL14"/>
    <property type="match status" value="1"/>
</dbReference>
<dbReference type="InterPro" id="IPR000218">
    <property type="entry name" value="Ribosomal_uL14"/>
</dbReference>
<dbReference type="InterPro" id="IPR005745">
    <property type="entry name" value="Ribosomal_uL14_bac-type"/>
</dbReference>
<dbReference type="InterPro" id="IPR019972">
    <property type="entry name" value="Ribosomal_uL14_CS"/>
</dbReference>
<dbReference type="InterPro" id="IPR036853">
    <property type="entry name" value="Ribosomal_uL14_sf"/>
</dbReference>
<dbReference type="NCBIfam" id="TIGR01067">
    <property type="entry name" value="rplN_bact"/>
    <property type="match status" value="1"/>
</dbReference>
<dbReference type="PANTHER" id="PTHR11761">
    <property type="entry name" value="50S/60S RIBOSOMAL PROTEIN L14/L23"/>
    <property type="match status" value="1"/>
</dbReference>
<dbReference type="PANTHER" id="PTHR11761:SF3">
    <property type="entry name" value="LARGE RIBOSOMAL SUBUNIT PROTEIN UL14M"/>
    <property type="match status" value="1"/>
</dbReference>
<dbReference type="Pfam" id="PF00238">
    <property type="entry name" value="Ribosomal_L14"/>
    <property type="match status" value="1"/>
</dbReference>
<dbReference type="SMART" id="SM01374">
    <property type="entry name" value="Ribosomal_L14"/>
    <property type="match status" value="1"/>
</dbReference>
<dbReference type="SUPFAM" id="SSF50193">
    <property type="entry name" value="Ribosomal protein L14"/>
    <property type="match status" value="1"/>
</dbReference>
<dbReference type="PROSITE" id="PS00049">
    <property type="entry name" value="RIBOSOMAL_L14"/>
    <property type="match status" value="1"/>
</dbReference>
<accession>B2IK72</accession>
<keyword id="KW-1185">Reference proteome</keyword>
<keyword id="KW-0687">Ribonucleoprotein</keyword>
<keyword id="KW-0689">Ribosomal protein</keyword>
<keyword id="KW-0694">RNA-binding</keyword>
<keyword id="KW-0699">rRNA-binding</keyword>
<name>RL14_BEII9</name>
<gene>
    <name evidence="1" type="primary">rplN</name>
    <name type="ordered locus">Bind_1364</name>
</gene>